<accession>A4K2X5</accession>
<name>WFDC5_SAIBB</name>
<feature type="signal peptide" evidence="2">
    <location>
        <begin position="1"/>
        <end position="24"/>
    </location>
</feature>
<feature type="chain" id="PRO_0000289644" description="WAP four-disulfide core domain protein 5">
    <location>
        <begin position="25"/>
        <end position="123"/>
    </location>
</feature>
<feature type="domain" description="WAP 1" evidence="3">
    <location>
        <begin position="27"/>
        <end position="73"/>
    </location>
</feature>
<feature type="domain" description="WAP 2" evidence="3">
    <location>
        <begin position="74"/>
        <end position="121"/>
    </location>
</feature>
<feature type="disulfide bond" evidence="3">
    <location>
        <begin position="34"/>
        <end position="62"/>
    </location>
</feature>
<feature type="disulfide bond" evidence="3">
    <location>
        <begin position="41"/>
        <end position="66"/>
    </location>
</feature>
<feature type="disulfide bond" evidence="3">
    <location>
        <begin position="49"/>
        <end position="61"/>
    </location>
</feature>
<feature type="disulfide bond" evidence="3">
    <location>
        <begin position="55"/>
        <end position="70"/>
    </location>
</feature>
<feature type="disulfide bond" evidence="3">
    <location>
        <begin position="81"/>
        <end position="109"/>
    </location>
</feature>
<feature type="disulfide bond" evidence="3">
    <location>
        <begin position="88"/>
        <end position="113"/>
    </location>
</feature>
<feature type="disulfide bond" evidence="3">
    <location>
        <begin position="96"/>
        <end position="108"/>
    </location>
</feature>
<feature type="disulfide bond" evidence="3">
    <location>
        <begin position="102"/>
        <end position="117"/>
    </location>
</feature>
<keyword id="KW-1015">Disulfide bond</keyword>
<keyword id="KW-0646">Protease inhibitor</keyword>
<keyword id="KW-1185">Reference proteome</keyword>
<keyword id="KW-0677">Repeat</keyword>
<keyword id="KW-0964">Secreted</keyword>
<keyword id="KW-0722">Serine protease inhibitor</keyword>
<keyword id="KW-0732">Signal</keyword>
<sequence length="123" mass="13302">MRIQSLLLLGALLAVGSQPPAAFGRKKGEKSGGCPPDDGPCLLSVPDQCMEDSQCPWTRKCCYKACFRQCVPRVSVKLGSCPEDQLRCLSPMNHLCHKDADCSGKKRCCPSACGRDCRDPARG</sequence>
<gene>
    <name type="primary">WFDC5</name>
</gene>
<evidence type="ECO:0000250" key="1"/>
<evidence type="ECO:0000255" key="2"/>
<evidence type="ECO:0000255" key="3">
    <source>
        <dbReference type="PROSITE-ProRule" id="PRU00722"/>
    </source>
</evidence>
<evidence type="ECO:0000305" key="4"/>
<proteinExistence type="inferred from homology"/>
<organism>
    <name type="scientific">Saimiri boliviensis boliviensis</name>
    <name type="common">Bolivian squirrel monkey</name>
    <dbReference type="NCBI Taxonomy" id="39432"/>
    <lineage>
        <taxon>Eukaryota</taxon>
        <taxon>Metazoa</taxon>
        <taxon>Chordata</taxon>
        <taxon>Craniata</taxon>
        <taxon>Vertebrata</taxon>
        <taxon>Euteleostomi</taxon>
        <taxon>Mammalia</taxon>
        <taxon>Eutheria</taxon>
        <taxon>Euarchontoglires</taxon>
        <taxon>Primates</taxon>
        <taxon>Haplorrhini</taxon>
        <taxon>Platyrrhini</taxon>
        <taxon>Cebidae</taxon>
        <taxon>Saimiriinae</taxon>
        <taxon>Saimiri</taxon>
    </lineage>
</organism>
<protein>
    <recommendedName>
        <fullName>WAP four-disulfide core domain protein 5</fullName>
    </recommendedName>
</protein>
<dbReference type="EMBL" id="DP000047">
    <property type="protein sequence ID" value="ABO53010.1"/>
    <property type="molecule type" value="Genomic_DNA"/>
</dbReference>
<dbReference type="RefSeq" id="XP_003936464.1">
    <property type="nucleotide sequence ID" value="XM_003936415.3"/>
</dbReference>
<dbReference type="SMR" id="A4K2X5"/>
<dbReference type="STRING" id="39432.ENSSBOP00000036396"/>
<dbReference type="Ensembl" id="ENSSBOT00000053328.1">
    <property type="protein sequence ID" value="ENSSBOP00000036396.1"/>
    <property type="gene ID" value="ENSSBOG00000034340.1"/>
</dbReference>
<dbReference type="GeneID" id="101047727"/>
<dbReference type="KEGG" id="sbq:101047727"/>
<dbReference type="CTD" id="149708"/>
<dbReference type="GeneTree" id="ENSGT00730000111369"/>
<dbReference type="OMA" id="GCPPDDK"/>
<dbReference type="OrthoDB" id="68130at9443"/>
<dbReference type="Proteomes" id="UP000233220">
    <property type="component" value="Unplaced"/>
</dbReference>
<dbReference type="GO" id="GO:0005615">
    <property type="term" value="C:extracellular space"/>
    <property type="evidence" value="ECO:0007669"/>
    <property type="project" value="TreeGrafter"/>
</dbReference>
<dbReference type="GO" id="GO:0004867">
    <property type="term" value="F:serine-type endopeptidase inhibitor activity"/>
    <property type="evidence" value="ECO:0007669"/>
    <property type="project" value="UniProtKB-KW"/>
</dbReference>
<dbReference type="GO" id="GO:0019731">
    <property type="term" value="P:antibacterial humoral response"/>
    <property type="evidence" value="ECO:0007669"/>
    <property type="project" value="TreeGrafter"/>
</dbReference>
<dbReference type="GO" id="GO:0045087">
    <property type="term" value="P:innate immune response"/>
    <property type="evidence" value="ECO:0007669"/>
    <property type="project" value="TreeGrafter"/>
</dbReference>
<dbReference type="Gene3D" id="4.10.75.10">
    <property type="entry name" value="Elafin-like"/>
    <property type="match status" value="2"/>
</dbReference>
<dbReference type="InterPro" id="IPR036645">
    <property type="entry name" value="Elafin-like_sf"/>
</dbReference>
<dbReference type="InterPro" id="IPR008197">
    <property type="entry name" value="WAP_dom"/>
</dbReference>
<dbReference type="InterPro" id="IPR050514">
    <property type="entry name" value="WAP_four-disulfide_core"/>
</dbReference>
<dbReference type="PANTHER" id="PTHR19441:SF39">
    <property type="entry name" value="WAP FOUR-DISULFIDE CORE DOMAIN PROTEIN 5"/>
    <property type="match status" value="1"/>
</dbReference>
<dbReference type="PANTHER" id="PTHR19441">
    <property type="entry name" value="WHEY ACDIC PROTEIN WAP"/>
    <property type="match status" value="1"/>
</dbReference>
<dbReference type="Pfam" id="PF00095">
    <property type="entry name" value="WAP"/>
    <property type="match status" value="2"/>
</dbReference>
<dbReference type="PRINTS" id="PR00003">
    <property type="entry name" value="4DISULPHCORE"/>
</dbReference>
<dbReference type="SMART" id="SM00217">
    <property type="entry name" value="WAP"/>
    <property type="match status" value="2"/>
</dbReference>
<dbReference type="SUPFAM" id="SSF57256">
    <property type="entry name" value="Elafin-like"/>
    <property type="match status" value="2"/>
</dbReference>
<dbReference type="PROSITE" id="PS51390">
    <property type="entry name" value="WAP"/>
    <property type="match status" value="2"/>
</dbReference>
<comment type="function">
    <text evidence="1">Putative acid-stable proteinase inhibitor.</text>
</comment>
<comment type="subcellular location">
    <subcellularLocation>
        <location evidence="4">Secreted</location>
    </subcellularLocation>
</comment>
<reference key="1">
    <citation type="journal article" date="2007" name="Genome Res.">
        <title>Comparative sequence analyses reveal rapid and divergent evolutionary changes of the WFDC locus in the primate lineage.</title>
        <authorList>
            <consortium name="NISC comparative sequencing program"/>
            <person name="Hurle B."/>
            <person name="Swanson W."/>
            <person name="Green E.D."/>
        </authorList>
    </citation>
    <scope>NUCLEOTIDE SEQUENCE [GENOMIC DNA]</scope>
</reference>